<organism>
    <name type="scientific">Candida glabrata (strain ATCC 2001 / BCRC 20586 / JCM 3761 / NBRC 0622 / NRRL Y-65 / CBS 138)</name>
    <name type="common">Yeast</name>
    <name type="synonym">Nakaseomyces glabratus</name>
    <dbReference type="NCBI Taxonomy" id="284593"/>
    <lineage>
        <taxon>Eukaryota</taxon>
        <taxon>Fungi</taxon>
        <taxon>Dikarya</taxon>
        <taxon>Ascomycota</taxon>
        <taxon>Saccharomycotina</taxon>
        <taxon>Saccharomycetes</taxon>
        <taxon>Saccharomycetales</taxon>
        <taxon>Saccharomycetaceae</taxon>
        <taxon>Nakaseomyces</taxon>
    </lineage>
</organism>
<comment type="function">
    <text evidence="1">Essential component of the PAM complex, a complex required for the translocation of transit peptide-containing proteins from the inner membrane into the mitochondrial matrix in an ATP-dependent manner. In the complex, it is required to regulate activity of mtHSP70 (SSC1) via its interaction with PAM18/TIM14. May act by positioning PAM18/TIM14 in juxtaposition to mtHSP70 at the translocon to maximize ATPase stimulation (By similarity).</text>
</comment>
<comment type="subunit">
    <text evidence="1">Heterodimer with PAM18. Component of the PAM complex, at least composed of mtHsp70, MGE1, TIM44, PAM16, PAM17 and PAM18 (By similarity).</text>
</comment>
<comment type="subcellular location">
    <subcellularLocation>
        <location evidence="1">Mitochondrion inner membrane</location>
        <topology evidence="1">Peripheral membrane protein</topology>
    </subcellularLocation>
</comment>
<comment type="domain">
    <text evidence="1">The J-like region, although related to the J domain does not stimulate ATPase activity of mtHSP70. It nevertheless mediates the heterodimerization with the J domain of PAM18 and is therefore essential for PAM complex function (By similarity).</text>
</comment>
<comment type="similarity">
    <text evidence="3">Belongs to the TIM16/PAM16 family.</text>
</comment>
<sequence length="146" mass="15993">MAHRALVKIVITGTRVLGHAFAEAYRQAAAQSAAKQGASAMGRNKTGRGNAAAEYGGITLDESCKILNLDAAKDLKLDKVNQRFDYLFNINDKEKGGSFYLQSKIYRASERLKWELAQREKEAAEEKLPKAEDASEDTGEKSPPSS</sequence>
<reference key="1">
    <citation type="journal article" date="2004" name="Nature">
        <title>Genome evolution in yeasts.</title>
        <authorList>
            <person name="Dujon B."/>
            <person name="Sherman D."/>
            <person name="Fischer G."/>
            <person name="Durrens P."/>
            <person name="Casaregola S."/>
            <person name="Lafontaine I."/>
            <person name="de Montigny J."/>
            <person name="Marck C."/>
            <person name="Neuveglise C."/>
            <person name="Talla E."/>
            <person name="Goffard N."/>
            <person name="Frangeul L."/>
            <person name="Aigle M."/>
            <person name="Anthouard V."/>
            <person name="Babour A."/>
            <person name="Barbe V."/>
            <person name="Barnay S."/>
            <person name="Blanchin S."/>
            <person name="Beckerich J.-M."/>
            <person name="Beyne E."/>
            <person name="Bleykasten C."/>
            <person name="Boisrame A."/>
            <person name="Boyer J."/>
            <person name="Cattolico L."/>
            <person name="Confanioleri F."/>
            <person name="de Daruvar A."/>
            <person name="Despons L."/>
            <person name="Fabre E."/>
            <person name="Fairhead C."/>
            <person name="Ferry-Dumazet H."/>
            <person name="Groppi A."/>
            <person name="Hantraye F."/>
            <person name="Hennequin C."/>
            <person name="Jauniaux N."/>
            <person name="Joyet P."/>
            <person name="Kachouri R."/>
            <person name="Kerrest A."/>
            <person name="Koszul R."/>
            <person name="Lemaire M."/>
            <person name="Lesur I."/>
            <person name="Ma L."/>
            <person name="Muller H."/>
            <person name="Nicaud J.-M."/>
            <person name="Nikolski M."/>
            <person name="Oztas S."/>
            <person name="Ozier-Kalogeropoulos O."/>
            <person name="Pellenz S."/>
            <person name="Potier S."/>
            <person name="Richard G.-F."/>
            <person name="Straub M.-L."/>
            <person name="Suleau A."/>
            <person name="Swennen D."/>
            <person name="Tekaia F."/>
            <person name="Wesolowski-Louvel M."/>
            <person name="Westhof E."/>
            <person name="Wirth B."/>
            <person name="Zeniou-Meyer M."/>
            <person name="Zivanovic Y."/>
            <person name="Bolotin-Fukuhara M."/>
            <person name="Thierry A."/>
            <person name="Bouchier C."/>
            <person name="Caudron B."/>
            <person name="Scarpelli C."/>
            <person name="Gaillardin C."/>
            <person name="Weissenbach J."/>
            <person name="Wincker P."/>
            <person name="Souciet J.-L."/>
        </authorList>
    </citation>
    <scope>NUCLEOTIDE SEQUENCE [LARGE SCALE GENOMIC DNA]</scope>
    <source>
        <strain>ATCC 2001 / BCRC 20586 / JCM 3761 / NBRC 0622 / NRRL Y-65 / CBS 138</strain>
    </source>
</reference>
<gene>
    <name type="primary">PAM16</name>
    <name type="synonym">TIM16</name>
    <name type="ordered locus">CAGL0G04521g</name>
</gene>
<keyword id="KW-0472">Membrane</keyword>
<keyword id="KW-0496">Mitochondrion</keyword>
<keyword id="KW-0999">Mitochondrion inner membrane</keyword>
<keyword id="KW-0653">Protein transport</keyword>
<keyword id="KW-1185">Reference proteome</keyword>
<keyword id="KW-0811">Translocation</keyword>
<keyword id="KW-0813">Transport</keyword>
<proteinExistence type="inferred from homology"/>
<name>TIM16_CANGA</name>
<dbReference type="EMBL" id="CR380953">
    <property type="protein sequence ID" value="CAG59483.1"/>
    <property type="molecule type" value="Genomic_DNA"/>
</dbReference>
<dbReference type="RefSeq" id="XP_446556.1">
    <property type="nucleotide sequence ID" value="XM_446556.1"/>
</dbReference>
<dbReference type="SMR" id="Q6FT88"/>
<dbReference type="FunCoup" id="Q6FT88">
    <property type="interactions" value="276"/>
</dbReference>
<dbReference type="STRING" id="284593.Q6FT88"/>
<dbReference type="EnsemblFungi" id="CAGL0G04521g-T">
    <property type="protein sequence ID" value="CAGL0G04521g-T-p1"/>
    <property type="gene ID" value="CAGL0G04521g"/>
</dbReference>
<dbReference type="KEGG" id="cgr:2887993"/>
<dbReference type="CGD" id="CAL0130657">
    <property type="gene designation" value="CAGL0G04521g"/>
</dbReference>
<dbReference type="VEuPathDB" id="FungiDB:CAGL0G04521g"/>
<dbReference type="eggNOG" id="KOG3442">
    <property type="taxonomic scope" value="Eukaryota"/>
</dbReference>
<dbReference type="HOGENOM" id="CLU_101461_0_1_1"/>
<dbReference type="InParanoid" id="Q6FT88"/>
<dbReference type="Proteomes" id="UP000002428">
    <property type="component" value="Chromosome G"/>
</dbReference>
<dbReference type="GO" id="GO:0001405">
    <property type="term" value="C:PAM complex, Tim23 associated import motor"/>
    <property type="evidence" value="ECO:0007669"/>
    <property type="project" value="EnsemblFungi"/>
</dbReference>
<dbReference type="GO" id="GO:0019904">
    <property type="term" value="F:protein domain specific binding"/>
    <property type="evidence" value="ECO:0007669"/>
    <property type="project" value="EnsemblFungi"/>
</dbReference>
<dbReference type="GO" id="GO:0030150">
    <property type="term" value="P:protein import into mitochondrial matrix"/>
    <property type="evidence" value="ECO:0007669"/>
    <property type="project" value="EnsemblFungi"/>
</dbReference>
<dbReference type="FunFam" id="1.10.287.110:FF:000006">
    <property type="entry name" value="Import inner membrane translocase subunit TIM16"/>
    <property type="match status" value="1"/>
</dbReference>
<dbReference type="Gene3D" id="1.10.287.110">
    <property type="entry name" value="DnaJ domain"/>
    <property type="match status" value="1"/>
</dbReference>
<dbReference type="InterPro" id="IPR036869">
    <property type="entry name" value="J_dom_sf"/>
</dbReference>
<dbReference type="InterPro" id="IPR005341">
    <property type="entry name" value="Tim16"/>
</dbReference>
<dbReference type="PANTHER" id="PTHR12388">
    <property type="entry name" value="MITOCHONDRIA ASSOCIATED GRANULOCYTE MACROPHAGE CSF SIGNALING MOLECULE"/>
    <property type="match status" value="1"/>
</dbReference>
<dbReference type="PANTHER" id="PTHR12388:SF0">
    <property type="entry name" value="MITOCHONDRIAL IMPORT INNER MEMBRANE TRANSLOCASE SUBUNIT TIM16"/>
    <property type="match status" value="1"/>
</dbReference>
<dbReference type="Pfam" id="PF03656">
    <property type="entry name" value="Pam16"/>
    <property type="match status" value="1"/>
</dbReference>
<evidence type="ECO:0000250" key="1"/>
<evidence type="ECO:0000256" key="2">
    <source>
        <dbReference type="SAM" id="MobiDB-lite"/>
    </source>
</evidence>
<evidence type="ECO:0000305" key="3"/>
<accession>Q6FT88</accession>
<feature type="chain" id="PRO_0000214090" description="Mitochondrial import inner membrane translocase subunit TIM16">
    <location>
        <begin position="1"/>
        <end position="146"/>
    </location>
</feature>
<feature type="region of interest" description="J-like">
    <location>
        <begin position="62"/>
        <end position="117"/>
    </location>
</feature>
<feature type="region of interest" description="Disordered" evidence="2">
    <location>
        <begin position="118"/>
        <end position="146"/>
    </location>
</feature>
<feature type="compositionally biased region" description="Basic and acidic residues" evidence="2">
    <location>
        <begin position="118"/>
        <end position="133"/>
    </location>
</feature>
<protein>
    <recommendedName>
        <fullName>Mitochondrial import inner membrane translocase subunit TIM16</fullName>
    </recommendedName>
    <alternativeName>
        <fullName>Presequence translocated-associated motor subunit PAM16</fullName>
    </alternativeName>
</protein>